<reference key="1">
    <citation type="journal article" date="2004" name="Science">
        <title>Mutations in a human ROBO gene disrupt hindbrain axon pathway crossing and morphogenesis.</title>
        <authorList>
            <person name="Jen J.C."/>
            <person name="Chan W.-M."/>
            <person name="Bosley T.M."/>
            <person name="Wan J.-J."/>
            <person name="Carr J.R."/>
            <person name="Rueb U."/>
            <person name="Shattuck D."/>
            <person name="Salamon G."/>
            <person name="Kudo L.C."/>
            <person name="Ou J."/>
            <person name="Lin D.D.M."/>
            <person name="Salih M.A.M."/>
            <person name="Kansu T."/>
            <person name="Al Dhalaan H."/>
            <person name="Al-Zayed Z."/>
            <person name="MacDonald D.B."/>
            <person name="Stigsby B."/>
            <person name="Plaitakis A."/>
            <person name="Dretakis E.K."/>
            <person name="Gottlob I."/>
            <person name="Pieh C."/>
            <person name="Traboulsi E.I."/>
            <person name="Wang Q."/>
            <person name="Wang L."/>
            <person name="Andrews C."/>
            <person name="Yamada K."/>
            <person name="Demer J.L."/>
            <person name="Karim S."/>
            <person name="Alger J.R."/>
            <person name="Geschwind D.H."/>
            <person name="Deller T."/>
            <person name="Sicotte N.L."/>
            <person name="Nelson S.F."/>
            <person name="Baloh R.W."/>
            <person name="Engle E.C."/>
        </authorList>
    </citation>
    <scope>NUCLEOTIDE SEQUENCE [MRNA] (ISOFORM 1)</scope>
    <scope>FUNCTION</scope>
    <scope>VARIANTS HGPPS1 PRO-5; LEU-66; LYS-319; GLU-361; PRO-703 AND PRO-705</scope>
</reference>
<reference key="2">
    <citation type="journal article" date="2004" name="Nat. Genet.">
        <title>Complete sequencing and characterization of 21,243 full-length human cDNAs.</title>
        <authorList>
            <person name="Ota T."/>
            <person name="Suzuki Y."/>
            <person name="Nishikawa T."/>
            <person name="Otsuki T."/>
            <person name="Sugiyama T."/>
            <person name="Irie R."/>
            <person name="Wakamatsu A."/>
            <person name="Hayashi K."/>
            <person name="Sato H."/>
            <person name="Nagai K."/>
            <person name="Kimura K."/>
            <person name="Makita H."/>
            <person name="Sekine M."/>
            <person name="Obayashi M."/>
            <person name="Nishi T."/>
            <person name="Shibahara T."/>
            <person name="Tanaka T."/>
            <person name="Ishii S."/>
            <person name="Yamamoto J."/>
            <person name="Saito K."/>
            <person name="Kawai Y."/>
            <person name="Isono Y."/>
            <person name="Nakamura Y."/>
            <person name="Nagahari K."/>
            <person name="Murakami K."/>
            <person name="Yasuda T."/>
            <person name="Iwayanagi T."/>
            <person name="Wagatsuma M."/>
            <person name="Shiratori A."/>
            <person name="Sudo H."/>
            <person name="Hosoiri T."/>
            <person name="Kaku Y."/>
            <person name="Kodaira H."/>
            <person name="Kondo H."/>
            <person name="Sugawara M."/>
            <person name="Takahashi M."/>
            <person name="Kanda K."/>
            <person name="Yokoi T."/>
            <person name="Furuya T."/>
            <person name="Kikkawa E."/>
            <person name="Omura Y."/>
            <person name="Abe K."/>
            <person name="Kamihara K."/>
            <person name="Katsuta N."/>
            <person name="Sato K."/>
            <person name="Tanikawa M."/>
            <person name="Yamazaki M."/>
            <person name="Ninomiya K."/>
            <person name="Ishibashi T."/>
            <person name="Yamashita H."/>
            <person name="Murakawa K."/>
            <person name="Fujimori K."/>
            <person name="Tanai H."/>
            <person name="Kimata M."/>
            <person name="Watanabe M."/>
            <person name="Hiraoka S."/>
            <person name="Chiba Y."/>
            <person name="Ishida S."/>
            <person name="Ono Y."/>
            <person name="Takiguchi S."/>
            <person name="Watanabe S."/>
            <person name="Yosida M."/>
            <person name="Hotuta T."/>
            <person name="Kusano J."/>
            <person name="Kanehori K."/>
            <person name="Takahashi-Fujii A."/>
            <person name="Hara H."/>
            <person name="Tanase T.-O."/>
            <person name="Nomura Y."/>
            <person name="Togiya S."/>
            <person name="Komai F."/>
            <person name="Hara R."/>
            <person name="Takeuchi K."/>
            <person name="Arita M."/>
            <person name="Imose N."/>
            <person name="Musashino K."/>
            <person name="Yuuki H."/>
            <person name="Oshima A."/>
            <person name="Sasaki N."/>
            <person name="Aotsuka S."/>
            <person name="Yoshikawa Y."/>
            <person name="Matsunawa H."/>
            <person name="Ichihara T."/>
            <person name="Shiohata N."/>
            <person name="Sano S."/>
            <person name="Moriya S."/>
            <person name="Momiyama H."/>
            <person name="Satoh N."/>
            <person name="Takami S."/>
            <person name="Terashima Y."/>
            <person name="Suzuki O."/>
            <person name="Nakagawa S."/>
            <person name="Senoh A."/>
            <person name="Mizoguchi H."/>
            <person name="Goto Y."/>
            <person name="Shimizu F."/>
            <person name="Wakebe H."/>
            <person name="Hishigaki H."/>
            <person name="Watanabe T."/>
            <person name="Sugiyama A."/>
            <person name="Takemoto M."/>
            <person name="Kawakami B."/>
            <person name="Yamazaki M."/>
            <person name="Watanabe K."/>
            <person name="Kumagai A."/>
            <person name="Itakura S."/>
            <person name="Fukuzumi Y."/>
            <person name="Fujimori Y."/>
            <person name="Komiyama M."/>
            <person name="Tashiro H."/>
            <person name="Tanigami A."/>
            <person name="Fujiwara T."/>
            <person name="Ono T."/>
            <person name="Yamada K."/>
            <person name="Fujii Y."/>
            <person name="Ozaki K."/>
            <person name="Hirao M."/>
            <person name="Ohmori Y."/>
            <person name="Kawabata A."/>
            <person name="Hikiji T."/>
            <person name="Kobatake N."/>
            <person name="Inagaki H."/>
            <person name="Ikema Y."/>
            <person name="Okamoto S."/>
            <person name="Okitani R."/>
            <person name="Kawakami T."/>
            <person name="Noguchi S."/>
            <person name="Itoh T."/>
            <person name="Shigeta K."/>
            <person name="Senba T."/>
            <person name="Matsumura K."/>
            <person name="Nakajima Y."/>
            <person name="Mizuno T."/>
            <person name="Morinaga M."/>
            <person name="Sasaki M."/>
            <person name="Togashi T."/>
            <person name="Oyama M."/>
            <person name="Hata H."/>
            <person name="Watanabe M."/>
            <person name="Komatsu T."/>
            <person name="Mizushima-Sugano J."/>
            <person name="Satoh T."/>
            <person name="Shirai Y."/>
            <person name="Takahashi Y."/>
            <person name="Nakagawa K."/>
            <person name="Okumura K."/>
            <person name="Nagase T."/>
            <person name="Nomura N."/>
            <person name="Kikuchi H."/>
            <person name="Masuho Y."/>
            <person name="Yamashita R."/>
            <person name="Nakai K."/>
            <person name="Yada T."/>
            <person name="Nakamura Y."/>
            <person name="Ohara O."/>
            <person name="Isogai T."/>
            <person name="Sugano S."/>
        </authorList>
    </citation>
    <scope>NUCLEOTIDE SEQUENCE [LARGE SCALE MRNA] (ISOFORM 2)</scope>
    <scope>VARIANTS MET-423 AND LEU-868</scope>
</reference>
<reference key="3">
    <citation type="journal article" date="2009" name="Sci. Signal.">
        <title>Quantitative phosphoproteomic analysis of T cell receptor signaling reveals system-wide modulation of protein-protein interactions.</title>
        <authorList>
            <person name="Mayya V."/>
            <person name="Lundgren D.H."/>
            <person name="Hwang S.-I."/>
            <person name="Rezaul K."/>
            <person name="Wu L."/>
            <person name="Eng J.K."/>
            <person name="Rodionov V."/>
            <person name="Han D.K."/>
        </authorList>
    </citation>
    <scope>PHOSPHORYLATION [LARGE SCALE ANALYSIS] AT SER-1263</scope>
    <scope>IDENTIFICATION BY MASS SPECTROMETRY [LARGE SCALE ANALYSIS]</scope>
    <source>
        <tissue>Leukemic T-cell</tissue>
    </source>
</reference>
<reference evidence="13 14 15" key="4">
    <citation type="journal article" date="2020" name="Nat. Commun.">
        <title>NELL2-Robo3 complex structure reveals mechanisms of receptor activation for axon guidance.</title>
        <authorList>
            <person name="Pak J.S."/>
            <person name="DeLoughery Z.J."/>
            <person name="Wang J."/>
            <person name="Acharya N."/>
            <person name="Park Y."/>
            <person name="Jaworski A."/>
            <person name="Ozkan E."/>
        </authorList>
    </citation>
    <scope>X-RAY CRYSTALLOGRAPHY (1.80 ANGSTROMS) OF 664-870 IN COMPLEX WITH NELL2</scope>
    <scope>MUTAGENESIS OF PHE-594; ASN-600; THR-601; TRP-602; THR-604; ILE-624; LEU-626; ARG-630; TRP-635 AND GLU-639</scope>
</reference>
<protein>
    <recommendedName>
        <fullName>Roundabout homolog 3</fullName>
    </recommendedName>
    <alternativeName>
        <fullName>Roundabout-like protein 3</fullName>
    </alternativeName>
</protein>
<proteinExistence type="evidence at protein level"/>
<feature type="signal peptide" evidence="2">
    <location>
        <begin position="1"/>
        <end position="20"/>
    </location>
</feature>
<feature type="chain" id="PRO_0000031038" description="Roundabout homolog 3">
    <location>
        <begin position="21"/>
        <end position="1386"/>
    </location>
</feature>
<feature type="topological domain" description="Extracellular" evidence="2">
    <location>
        <begin position="21"/>
        <end position="891"/>
    </location>
</feature>
<feature type="transmembrane region" description="Helical" evidence="2">
    <location>
        <begin position="892"/>
        <end position="912"/>
    </location>
</feature>
<feature type="topological domain" description="Cytoplasmic" evidence="2">
    <location>
        <begin position="913"/>
        <end position="1386"/>
    </location>
</feature>
<feature type="domain" description="Ig-like C2-type 1" evidence="3">
    <location>
        <begin position="64"/>
        <end position="160"/>
    </location>
</feature>
<feature type="domain" description="Ig-like C2-type 2" evidence="3">
    <location>
        <begin position="166"/>
        <end position="253"/>
    </location>
</feature>
<feature type="domain" description="Ig-like C2-type 3" evidence="3">
    <location>
        <begin position="258"/>
        <end position="342"/>
    </location>
</feature>
<feature type="domain" description="Ig-like C2-type 4" evidence="3">
    <location>
        <begin position="347"/>
        <end position="440"/>
    </location>
</feature>
<feature type="domain" description="Ig-like C2-type 5" evidence="3">
    <location>
        <begin position="450"/>
        <end position="531"/>
    </location>
</feature>
<feature type="domain" description="Fibronectin type-III 1" evidence="4">
    <location>
        <begin position="558"/>
        <end position="652"/>
    </location>
</feature>
<feature type="domain" description="Fibronectin type-III 2" evidence="4">
    <location>
        <begin position="671"/>
        <end position="766"/>
    </location>
</feature>
<feature type="domain" description="Fibronectin type-III 3" evidence="4">
    <location>
        <begin position="771"/>
        <end position="869"/>
    </location>
</feature>
<feature type="region of interest" description="Disordered" evidence="5">
    <location>
        <begin position="541"/>
        <end position="563"/>
    </location>
</feature>
<feature type="region of interest" description="Disordered" evidence="5">
    <location>
        <begin position="639"/>
        <end position="662"/>
    </location>
</feature>
<feature type="region of interest" description="Disordered" evidence="5">
    <location>
        <begin position="965"/>
        <end position="989"/>
    </location>
</feature>
<feature type="region of interest" description="Disordered" evidence="5">
    <location>
        <begin position="1028"/>
        <end position="1310"/>
    </location>
</feature>
<feature type="region of interest" description="Disordered" evidence="5">
    <location>
        <begin position="1327"/>
        <end position="1386"/>
    </location>
</feature>
<feature type="compositionally biased region" description="Pro residues" evidence="5">
    <location>
        <begin position="546"/>
        <end position="559"/>
    </location>
</feature>
<feature type="compositionally biased region" description="Low complexity" evidence="5">
    <location>
        <begin position="1067"/>
        <end position="1083"/>
    </location>
</feature>
<feature type="compositionally biased region" description="Acidic residues" evidence="5">
    <location>
        <begin position="1099"/>
        <end position="1112"/>
    </location>
</feature>
<feature type="compositionally biased region" description="Pro residues" evidence="5">
    <location>
        <begin position="1158"/>
        <end position="1169"/>
    </location>
</feature>
<feature type="compositionally biased region" description="Low complexity" evidence="5">
    <location>
        <begin position="1178"/>
        <end position="1191"/>
    </location>
</feature>
<feature type="compositionally biased region" description="Low complexity" evidence="5">
    <location>
        <begin position="1202"/>
        <end position="1229"/>
    </location>
</feature>
<feature type="compositionally biased region" description="Basic and acidic residues" evidence="5">
    <location>
        <begin position="1294"/>
        <end position="1304"/>
    </location>
</feature>
<feature type="compositionally biased region" description="Polar residues" evidence="5">
    <location>
        <begin position="1333"/>
        <end position="1344"/>
    </location>
</feature>
<feature type="compositionally biased region" description="Low complexity" evidence="5">
    <location>
        <begin position="1345"/>
        <end position="1361"/>
    </location>
</feature>
<feature type="modified residue" description="Phosphoserine" evidence="16">
    <location>
        <position position="1263"/>
    </location>
</feature>
<feature type="glycosylation site" description="N-linked (GlcNAc...) asparagine" evidence="2">
    <location>
        <position position="25"/>
    </location>
</feature>
<feature type="glycosylation site" description="N-linked (GlcNAc...) asparagine" evidence="2">
    <location>
        <position position="34"/>
    </location>
</feature>
<feature type="glycosylation site" description="N-linked (GlcNAc...) asparagine" evidence="2">
    <location>
        <position position="41"/>
    </location>
</feature>
<feature type="glycosylation site" description="N-linked (GlcNAc...) asparagine" evidence="2">
    <location>
        <position position="53"/>
    </location>
</feature>
<feature type="glycosylation site" description="N-linked (GlcNAc...) asparagine" evidence="2">
    <location>
        <position position="156"/>
    </location>
</feature>
<feature type="glycosylation site" description="N-linked (GlcNAc...) asparagine" evidence="2">
    <location>
        <position position="410"/>
    </location>
</feature>
<feature type="glycosylation site" description="N-linked (GlcNAc...) asparagine" evidence="2">
    <location>
        <position position="459"/>
    </location>
</feature>
<feature type="glycosylation site" description="N-linked (GlcNAc...) asparagine" evidence="2">
    <location>
        <position position="503"/>
    </location>
</feature>
<feature type="glycosylation site" description="N-linked (GlcNAc...) asparagine" evidence="2">
    <location>
        <position position="784"/>
    </location>
</feature>
<feature type="glycosylation site" description="N-linked (GlcNAc...) asparagine" evidence="2">
    <location>
        <position position="813"/>
    </location>
</feature>
<feature type="glycosylation site" description="N-linked (GlcNAc...) asparagine" evidence="2">
    <location>
        <position position="820"/>
    </location>
</feature>
<feature type="disulfide bond" evidence="3">
    <location>
        <begin position="85"/>
        <end position="143"/>
    </location>
</feature>
<feature type="disulfide bond" evidence="3">
    <location>
        <begin position="187"/>
        <end position="236"/>
    </location>
</feature>
<feature type="disulfide bond" evidence="3">
    <location>
        <begin position="279"/>
        <end position="326"/>
    </location>
</feature>
<feature type="disulfide bond" evidence="3">
    <location>
        <begin position="368"/>
        <end position="424"/>
    </location>
</feature>
<feature type="disulfide bond" evidence="3">
    <location>
        <begin position="472"/>
        <end position="521"/>
    </location>
</feature>
<feature type="splice variant" id="VSP_010650" description="In isoform 2." evidence="9">
    <original>AGEELQTFHG</original>
    <variation>LTTPLLILTT</variation>
    <location>
        <begin position="1025"/>
        <end position="1034"/>
    </location>
</feature>
<feature type="splice variant" id="VSP_010651" description="In isoform 2." evidence="9">
    <location>
        <begin position="1035"/>
        <end position="1386"/>
    </location>
</feature>
<feature type="sequence variant" id="VAR_019119" description="In HGPPS1; dbSNP:rs121918275." evidence="7">
    <original>L</original>
    <variation>P</variation>
    <location>
        <position position="5"/>
    </location>
</feature>
<feature type="sequence variant" id="VAR_019120" description="In HGPPS1; dbSNP:rs121918276." evidence="7">
    <original>I</original>
    <variation>L</variation>
    <location>
        <position position="66"/>
    </location>
</feature>
<feature type="sequence variant" id="VAR_019073" description="In HGPPS1; dbSNP:rs121918274." evidence="7">
    <original>E</original>
    <variation>K</variation>
    <location>
        <position position="319"/>
    </location>
</feature>
<feature type="sequence variant" id="VAR_019121" description="In HGPPS1; dbSNP:rs121918270." evidence="7">
    <original>G</original>
    <variation>E</variation>
    <location>
        <position position="361"/>
    </location>
</feature>
<feature type="sequence variant" id="VAR_053642" description="In dbSNP:rs3862618.">
    <original>R</original>
    <variation>H</variation>
    <location>
        <position position="416"/>
    </location>
</feature>
<feature type="sequence variant" id="VAR_034474" description="In dbSNP:rs4935898." evidence="6">
    <original>V</original>
    <variation>M</variation>
    <location>
        <position position="423"/>
    </location>
</feature>
<feature type="sequence variant" id="VAR_019074" description="In HGPPS1; dbSNP:rs121918271." evidence="7">
    <original>R</original>
    <variation>P</variation>
    <location>
        <position position="703"/>
    </location>
</feature>
<feature type="sequence variant" id="VAR_019075" description="In HGPPS1; dbSNP:rs121918272." evidence="7">
    <original>S</original>
    <variation>P</variation>
    <location>
        <position position="705"/>
    </location>
</feature>
<feature type="sequence variant" id="VAR_062145" description="In dbSNP:rs55706177." evidence="6">
    <original>P</original>
    <variation>L</variation>
    <location>
        <position position="868"/>
    </location>
</feature>
<feature type="sequence variant" id="VAR_034475" description="In dbSNP:rs35723495.">
    <original>Q</original>
    <variation>R</variation>
    <location>
        <position position="1369"/>
    </location>
</feature>
<feature type="mutagenesis site" description="Abolishes binding to NELL2; when associated with A-602." evidence="8">
    <original>F</original>
    <variation>A</variation>
    <location>
        <position position="594"/>
    </location>
</feature>
<feature type="mutagenesis site" description="Does not affect binding to NELL2; when associated with A-601." evidence="8">
    <original>N</original>
    <variation>A</variation>
    <location>
        <position position="600"/>
    </location>
</feature>
<feature type="mutagenesis site" description="Does not affect binding to NELL2; when associated with A-600." evidence="8">
    <original>T</original>
    <variation>A</variation>
    <location>
        <position position="601"/>
    </location>
</feature>
<feature type="mutagenesis site" description="Abolishes binding to NELL2; when associated with A-594." evidence="8">
    <original>W</original>
    <variation>A</variation>
    <location>
        <position position="602"/>
    </location>
</feature>
<feature type="mutagenesis site" description="Decreases binding to NELL2." evidence="8">
    <original>T</original>
    <variation>A</variation>
    <location>
        <position position="604"/>
    </location>
</feature>
<feature type="mutagenesis site" description="Decreases binding to NELL2; when associated with A-626." evidence="8">
    <original>I</original>
    <variation>A</variation>
    <location>
        <position position="624"/>
    </location>
</feature>
<feature type="mutagenesis site" description="Decreases binding to NELL2; when associated with A-624." evidence="8">
    <original>L</original>
    <variation>A</variation>
    <location>
        <position position="626"/>
    </location>
</feature>
<feature type="mutagenesis site" description="Abolishes binding to NELL2." evidence="8">
    <original>R</original>
    <variation>A</variation>
    <location>
        <position position="630"/>
    </location>
</feature>
<feature type="mutagenesis site" description="Does not affect binding to NELL2." evidence="8">
    <original>W</original>
    <variation>A</variation>
    <location>
        <position position="635"/>
    </location>
</feature>
<feature type="mutagenesis site" description="Does not affect binding to NELL2." evidence="8">
    <original>E</original>
    <variation>A</variation>
    <location>
        <position position="639"/>
    </location>
</feature>
<feature type="strand" evidence="19">
    <location>
        <begin position="563"/>
        <end position="567"/>
    </location>
</feature>
<feature type="strand" evidence="19">
    <location>
        <begin position="572"/>
        <end position="575"/>
    </location>
</feature>
<feature type="strand" evidence="19">
    <location>
        <begin position="588"/>
        <end position="594"/>
    </location>
</feature>
<feature type="turn" evidence="17">
    <location>
        <begin position="596"/>
        <end position="598"/>
    </location>
</feature>
<feature type="strand" evidence="19">
    <location>
        <begin position="603"/>
        <end position="609"/>
    </location>
</feature>
<feature type="strand" evidence="19">
    <location>
        <begin position="611"/>
        <end position="616"/>
    </location>
</feature>
<feature type="strand" evidence="19">
    <location>
        <begin position="624"/>
        <end position="633"/>
    </location>
</feature>
<feature type="strand" evidence="18">
    <location>
        <begin position="672"/>
        <end position="675"/>
    </location>
</feature>
<feature type="strand" evidence="18">
    <location>
        <begin position="686"/>
        <end position="694"/>
    </location>
</feature>
<feature type="helix" evidence="18">
    <location>
        <begin position="696"/>
        <end position="698"/>
    </location>
</feature>
<feature type="strand" evidence="18">
    <location>
        <begin position="701"/>
        <end position="708"/>
    </location>
</feature>
<feature type="strand" evidence="18">
    <location>
        <begin position="717"/>
        <end position="721"/>
    </location>
</feature>
<feature type="strand" evidence="18">
    <location>
        <begin position="728"/>
        <end position="731"/>
    </location>
</feature>
<feature type="strand" evidence="18">
    <location>
        <begin position="738"/>
        <end position="747"/>
    </location>
</feature>
<feature type="strand" evidence="18">
    <location>
        <begin position="759"/>
        <end position="762"/>
    </location>
</feature>
<feature type="strand" evidence="18">
    <location>
        <begin position="773"/>
        <end position="779"/>
    </location>
</feature>
<feature type="strand" evidence="18">
    <location>
        <begin position="782"/>
        <end position="785"/>
    </location>
</feature>
<feature type="strand" evidence="18">
    <location>
        <begin position="787"/>
        <end position="792"/>
    </location>
</feature>
<feature type="helix" evidence="18">
    <location>
        <begin position="796"/>
        <end position="799"/>
    </location>
</feature>
<feature type="strand" evidence="18">
    <location>
        <begin position="805"/>
        <end position="811"/>
    </location>
</feature>
<feature type="helix" evidence="18">
    <location>
        <begin position="815"/>
        <end position="817"/>
    </location>
</feature>
<feature type="strand" evidence="18">
    <location>
        <begin position="819"/>
        <end position="824"/>
    </location>
</feature>
<feature type="strand" evidence="18">
    <location>
        <begin position="829"/>
        <end position="832"/>
    </location>
</feature>
<feature type="strand" evidence="18">
    <location>
        <begin position="840"/>
        <end position="849"/>
    </location>
</feature>
<feature type="strand" evidence="18">
    <location>
        <begin position="852"/>
        <end position="856"/>
    </location>
</feature>
<feature type="strand" evidence="18">
    <location>
        <begin position="860"/>
        <end position="863"/>
    </location>
</feature>
<accession>Q96MS0</accession>
<sequence length="1386" mass="148209">MLRYLLKTLLQMNLFADSLAGDISNSSELLLGFNSSLAALNHTLLPPGDPSLNGSRVGPEDAMPRIVEQPPDLLVSRGEPATLPCRAEGRPRPNIEWYKNGARVATVREDPRAHRLLLPSGALFFPRIVHGRRARPDEGVYTCVARNYLGAAASRNASLEVAVLRDDFRQSPGNVVVAVGEPAVLECVPPRGHPEPSVSWRKDGARLKEEEGRITIRGGKLMMSHTLKSDAGMYVCVASNMAGERESAAAEVMVLERPSFLRRPVNQVVLADAPVTFLCEVKGDPPPRLRWRKEDGELPTGRYEIRSDHSLWIGHVSAEDEGTYTCVAENSVGRAEASGSLSVHVPPQLVTQPQDQMAAPGESVAFQCETKGNPPPAIFWQKEGSQVLLFPSQSLQPTGRFSVSPRGQLNITAVQRGDAGYYVCQAVSVAGSILAKALLEIKGASLDGLPPVILQGPANQTLVLGSSVWLPCRVTGNPQPSVRWKKDGQWLQGDDLQFKTMANGTLYIANVQEMDMGFYSCVAKSSTGEATWSGWLKMREDWGVSPDPPTEPSSPPGAPSQPVVTEITKNSITLTWKPNPQTGAAVTSYVIEAFSPAAGNTWRTVADGVQLETHTVSGLQPNTIYLFLVRAVGAWGLSEPSPVSEPVRTQDSSPSRPVEDPWRGQQGLAEVAVRLQEPIVLGPRTLQVSWTVDGPVQLVQGFRVSWRVAGPEGGSWTMLDLQSPSQQSTVLRGLPPGTQIQIKVQAQGQEGLGAESLSVTRSIPEEAPSGPPQGVAVALGGDGNSSITVSWEPPLPSQQNGVITEYQIWCLGNESRFHLNRSAAGWARSAMLRGLVPGLLYRTLVAAATSAGVGVPSAPVLVQLPSPPDLEPGLEVGAGLAVRLARVLREPAFLAGSGAACGALLLGLCAALYWRRKQRKELSHYTASFAYTPAVSFPHSEGLSGASSRPPMGLGPAPYSWLADSWPHPSRSPSAQEPRGSCCPSNPDPDDRYYNEAGISLYLAQTARGTAAPGEGPVYSTIDPAGEELQTFHGGFPQHPSGDLGPWSQYAPPEWSQGDSGAKGGKVKLLGKPVQMPSLNWPEALPPPPPSCELSCLEGPEEELEGSSEPEEWCPPMPERSHLTEPSSSGGCLVTPSRRETPSPTPSYGQQSTATLTPSPPDPPQPPTDMPHLHQMPRRVPLGPSSPLSVSQPMLGIREARPAGLGAGPAASPHLSPSPAPSTASSAPGRTWQGNGEMTPPLQGPRARFRKKPKALPYRRENSPGDLPPPPLPPPEEEASWALELRAAGSMSSLERERSGERKAVQAVPLAAQRVLHPDEEAWLPYSRPSFLSRGQGTSTCSTAGSNSSRGSSSSRGSRGPGRSRSRSQSRSQSQRPGQKRREEPR</sequence>
<organism>
    <name type="scientific">Homo sapiens</name>
    <name type="common">Human</name>
    <dbReference type="NCBI Taxonomy" id="9606"/>
    <lineage>
        <taxon>Eukaryota</taxon>
        <taxon>Metazoa</taxon>
        <taxon>Chordata</taxon>
        <taxon>Craniata</taxon>
        <taxon>Vertebrata</taxon>
        <taxon>Euteleostomi</taxon>
        <taxon>Mammalia</taxon>
        <taxon>Eutheria</taxon>
        <taxon>Euarchontoglires</taxon>
        <taxon>Primates</taxon>
        <taxon>Haplorrhini</taxon>
        <taxon>Catarrhini</taxon>
        <taxon>Hominidae</taxon>
        <taxon>Homo</taxon>
    </lineage>
</organism>
<comment type="function">
    <text evidence="1 7">Receptor involved in axon guidance during development (PubMed:15105459). Acts as a multifunctional regulator of pathfinding that simultaneously mediates NELL2 repulsion, inhibits SLIT repulsion, and facilitates Netrin-1/NTN1 attraction. In spinal cord development plays a role in guiding commissural axons probably by preventing premature sensitivity to Slit proteins thus inhibiting Slit signaling through ROBO1/ROBO2. Binding OF NELL2 to the receptor ROBO3 promotes oligomerization of ROBO3, resulting in the repulsion of commissural axons in the midline. ROBO3 also indirectly boosts axon attraction to NTN1 without interacting with NTN1 itself (By similarity).</text>
</comment>
<comment type="subunit">
    <text evidence="8">Monomer (PubMed:32198364). Interacts (via Fibronectin type-III 1 domain) with NELL2 (via the EGF domains) with a 3:3 stoichiometry; this interaction promotes oligomerization of ROBO3 resulting in the repulsion of commissural axons in the midline (PubMed:32198364).</text>
</comment>
<comment type="interaction">
    <interactant intactId="EBI-1220465">
        <id>Q96MS0</id>
    </interactant>
    <interactant intactId="EBI-16185191">
        <id>Q99435-1</id>
        <label>NELL2</label>
    </interactant>
    <organismsDiffer>false</organismsDiffer>
    <experiments>3</experiments>
</comment>
<comment type="subcellular location">
    <subcellularLocation>
        <location evidence="1">Membrane</location>
        <topology evidence="2">Single-pass type I membrane protein</topology>
    </subcellularLocation>
</comment>
<comment type="alternative products">
    <event type="alternative splicing"/>
    <isoform>
        <id>Q96MS0-1</id>
        <name>1</name>
        <name evidence="10">Robo3.1</name>
        <sequence type="displayed"/>
    </isoform>
    <isoform>
        <id>Q96MS0-2</id>
        <name>2</name>
        <sequence type="described" ref="VSP_010650 VSP_010651"/>
    </isoform>
</comment>
<comment type="disease" evidence="7">
    <disease id="DI-01576">
        <name>Gaze palsy, familial horizontal, with progressive scoliosis, 1</name>
        <acronym>HGPPS1</acronym>
        <description>An autosomal recessive neurologic disorder characterized by eye movement abnormalities apparent from birth, childhood-onset progressive scoliosis, distinctive brainstem malformation and defective crossing of some brainstem neuronal pathways.</description>
        <dbReference type="MIM" id="607313"/>
    </disease>
    <text>The disease is caused by variants affecting the gene represented in this entry.</text>
</comment>
<comment type="similarity">
    <text evidence="11">Belongs to the immunoglobulin superfamily. ROBO family.</text>
</comment>
<evidence type="ECO:0000250" key="1">
    <source>
        <dbReference type="UniProtKB" id="Q9Z2I4"/>
    </source>
</evidence>
<evidence type="ECO:0000255" key="2"/>
<evidence type="ECO:0000255" key="3">
    <source>
        <dbReference type="PROSITE-ProRule" id="PRU00114"/>
    </source>
</evidence>
<evidence type="ECO:0000255" key="4">
    <source>
        <dbReference type="PROSITE-ProRule" id="PRU00316"/>
    </source>
</evidence>
<evidence type="ECO:0000256" key="5">
    <source>
        <dbReference type="SAM" id="MobiDB-lite"/>
    </source>
</evidence>
<evidence type="ECO:0000269" key="6">
    <source>
    </source>
</evidence>
<evidence type="ECO:0000269" key="7">
    <source>
    </source>
</evidence>
<evidence type="ECO:0000269" key="8">
    <source>
    </source>
</evidence>
<evidence type="ECO:0000303" key="9">
    <source>
    </source>
</evidence>
<evidence type="ECO:0000303" key="10">
    <source>
    </source>
</evidence>
<evidence type="ECO:0000305" key="11"/>
<evidence type="ECO:0000312" key="12">
    <source>
        <dbReference type="HGNC" id="HGNC:13433"/>
    </source>
</evidence>
<evidence type="ECO:0007744" key="13">
    <source>
        <dbReference type="PDB" id="6POG"/>
    </source>
</evidence>
<evidence type="ECO:0007744" key="14">
    <source>
        <dbReference type="PDB" id="6POK"/>
    </source>
</evidence>
<evidence type="ECO:0007744" key="15">
    <source>
        <dbReference type="PDB" id="6POL"/>
    </source>
</evidence>
<evidence type="ECO:0007744" key="16">
    <source>
    </source>
</evidence>
<evidence type="ECO:0007829" key="17">
    <source>
        <dbReference type="PDB" id="6POG"/>
    </source>
</evidence>
<evidence type="ECO:0007829" key="18">
    <source>
        <dbReference type="PDB" id="6POK"/>
    </source>
</evidence>
<evidence type="ECO:0007829" key="19">
    <source>
        <dbReference type="PDB" id="6POL"/>
    </source>
</evidence>
<name>ROBO3_HUMAN</name>
<keyword id="KW-0002">3D-structure</keyword>
<keyword id="KW-0025">Alternative splicing</keyword>
<keyword id="KW-0145">Chemotaxis</keyword>
<keyword id="KW-0217">Developmental protein</keyword>
<keyword id="KW-0221">Differentiation</keyword>
<keyword id="KW-0225">Disease variant</keyword>
<keyword id="KW-1015">Disulfide bond</keyword>
<keyword id="KW-0325">Glycoprotein</keyword>
<keyword id="KW-0393">Immunoglobulin domain</keyword>
<keyword id="KW-0472">Membrane</keyword>
<keyword id="KW-0524">Neurogenesis</keyword>
<keyword id="KW-0597">Phosphoprotein</keyword>
<keyword id="KW-1267">Proteomics identification</keyword>
<keyword id="KW-0675">Receptor</keyword>
<keyword id="KW-1185">Reference proteome</keyword>
<keyword id="KW-0677">Repeat</keyword>
<keyword id="KW-0732">Signal</keyword>
<keyword id="KW-0812">Transmembrane</keyword>
<keyword id="KW-1133">Transmembrane helix</keyword>
<gene>
    <name evidence="12" type="primary">ROBO3</name>
</gene>
<dbReference type="EMBL" id="AY509035">
    <property type="protein sequence ID" value="AAS91662.1"/>
    <property type="molecule type" value="mRNA"/>
</dbReference>
<dbReference type="EMBL" id="AK056544">
    <property type="protein sequence ID" value="BAB71212.1"/>
    <property type="molecule type" value="mRNA"/>
</dbReference>
<dbReference type="CCDS" id="CCDS44755.1">
    <molecule id="Q96MS0-1"/>
</dbReference>
<dbReference type="RefSeq" id="NP_071765.2">
    <molecule id="Q96MS0-1"/>
    <property type="nucleotide sequence ID" value="NM_022370.3"/>
</dbReference>
<dbReference type="PDB" id="6POG">
    <property type="method" value="X-ray"/>
    <property type="resolution" value="2.75 A"/>
    <property type="chains" value="A=551-663"/>
</dbReference>
<dbReference type="PDB" id="6POK">
    <property type="method" value="X-ray"/>
    <property type="resolution" value="1.80 A"/>
    <property type="chains" value="A=664-870"/>
</dbReference>
<dbReference type="PDB" id="6POL">
    <property type="method" value="X-ray"/>
    <property type="resolution" value="1.80 A"/>
    <property type="chains" value="A/C/E=549-652"/>
</dbReference>
<dbReference type="PDBsum" id="6POG"/>
<dbReference type="PDBsum" id="6POK"/>
<dbReference type="PDBsum" id="6POL"/>
<dbReference type="SMR" id="Q96MS0"/>
<dbReference type="BioGRID" id="122111">
    <property type="interactions" value="16"/>
</dbReference>
<dbReference type="DIP" id="DIP-38410N"/>
<dbReference type="FunCoup" id="Q96MS0">
    <property type="interactions" value="446"/>
</dbReference>
<dbReference type="IntAct" id="Q96MS0">
    <property type="interactions" value="6"/>
</dbReference>
<dbReference type="STRING" id="9606.ENSP00000380903"/>
<dbReference type="GlyCosmos" id="Q96MS0">
    <property type="glycosylation" value="11 sites, No reported glycans"/>
</dbReference>
<dbReference type="GlyGen" id="Q96MS0">
    <property type="glycosylation" value="13 sites, 1 O-linked glycan (1 site)"/>
</dbReference>
<dbReference type="iPTMnet" id="Q96MS0"/>
<dbReference type="PhosphoSitePlus" id="Q96MS0"/>
<dbReference type="BioMuta" id="ROBO3"/>
<dbReference type="DMDM" id="49036492"/>
<dbReference type="jPOST" id="Q96MS0"/>
<dbReference type="MassIVE" id="Q96MS0"/>
<dbReference type="PaxDb" id="9606-ENSP00000380903"/>
<dbReference type="PeptideAtlas" id="Q96MS0"/>
<dbReference type="ProteomicsDB" id="77392">
    <molecule id="Q96MS0-1"/>
</dbReference>
<dbReference type="ProteomicsDB" id="77393">
    <molecule id="Q96MS0-2"/>
</dbReference>
<dbReference type="Antibodypedia" id="2550">
    <property type="antibodies" value="194 antibodies from 33 providers"/>
</dbReference>
<dbReference type="DNASU" id="64221"/>
<dbReference type="Ensembl" id="ENST00000397801.6">
    <molecule id="Q96MS0-1"/>
    <property type="protein sequence ID" value="ENSP00000380903.1"/>
    <property type="gene ID" value="ENSG00000154134.15"/>
</dbReference>
<dbReference type="GeneID" id="64221"/>
<dbReference type="KEGG" id="hsa:64221"/>
<dbReference type="MANE-Select" id="ENST00000397801.6">
    <property type="protein sequence ID" value="ENSP00000380903.1"/>
    <property type="RefSeq nucleotide sequence ID" value="NM_022370.4"/>
    <property type="RefSeq protein sequence ID" value="NP_071765.2"/>
</dbReference>
<dbReference type="UCSC" id="uc001qbc.4">
    <molecule id="Q96MS0-1"/>
    <property type="organism name" value="human"/>
</dbReference>
<dbReference type="AGR" id="HGNC:13433"/>
<dbReference type="CTD" id="64221"/>
<dbReference type="DisGeNET" id="64221"/>
<dbReference type="GeneCards" id="ROBO3"/>
<dbReference type="HGNC" id="HGNC:13433">
    <property type="gene designation" value="ROBO3"/>
</dbReference>
<dbReference type="HPA" id="ENSG00000154134">
    <property type="expression patterns" value="Tissue enhanced (ovary)"/>
</dbReference>
<dbReference type="MalaCards" id="ROBO3"/>
<dbReference type="MIM" id="607313">
    <property type="type" value="phenotype"/>
</dbReference>
<dbReference type="MIM" id="608630">
    <property type="type" value="gene"/>
</dbReference>
<dbReference type="neXtProt" id="NX_Q96MS0"/>
<dbReference type="OpenTargets" id="ENSG00000154134"/>
<dbReference type="Orphanet" id="2744">
    <property type="disease" value="Horizontal gaze palsy with progressive scoliosis"/>
</dbReference>
<dbReference type="PharmGKB" id="PA134896648"/>
<dbReference type="VEuPathDB" id="HostDB:ENSG00000154134"/>
<dbReference type="eggNOG" id="KOG4222">
    <property type="taxonomic scope" value="Eukaryota"/>
</dbReference>
<dbReference type="GeneTree" id="ENSGT00940000155457"/>
<dbReference type="HOGENOM" id="CLU_003227_5_1_1"/>
<dbReference type="InParanoid" id="Q96MS0"/>
<dbReference type="OMA" id="LMMSHTH"/>
<dbReference type="OrthoDB" id="428111at2759"/>
<dbReference type="PAN-GO" id="Q96MS0">
    <property type="GO annotations" value="6 GO annotations based on evolutionary models"/>
</dbReference>
<dbReference type="PhylomeDB" id="Q96MS0"/>
<dbReference type="TreeFam" id="TF351053"/>
<dbReference type="PathwayCommons" id="Q96MS0"/>
<dbReference type="Reactome" id="R-HSA-428542">
    <molecule id="Q96MS0-1"/>
    <property type="pathway name" value="Regulation of commissural axon pathfinding by SLIT and ROBO"/>
</dbReference>
<dbReference type="Reactome" id="R-HSA-9010553">
    <molecule id="Q96MS0-1"/>
    <property type="pathway name" value="Regulation of expression of SLITs and ROBOs"/>
</dbReference>
<dbReference type="Reactome" id="R-HSA-9010642">
    <molecule id="Q96MS0-1"/>
    <property type="pathway name" value="ROBO receptors bind AKAP5"/>
</dbReference>
<dbReference type="SignaLink" id="Q96MS0"/>
<dbReference type="SIGNOR" id="Q96MS0"/>
<dbReference type="BioGRID-ORCS" id="64221">
    <property type="hits" value="6 hits in 1147 CRISPR screens"/>
</dbReference>
<dbReference type="ChiTaRS" id="ROBO3">
    <property type="organism name" value="human"/>
</dbReference>
<dbReference type="GeneWiki" id="ROBO3"/>
<dbReference type="GenomeRNAi" id="64221"/>
<dbReference type="Pharos" id="Q96MS0">
    <property type="development level" value="Tbio"/>
</dbReference>
<dbReference type="PRO" id="PR:Q96MS0"/>
<dbReference type="Proteomes" id="UP000005640">
    <property type="component" value="Chromosome 11"/>
</dbReference>
<dbReference type="RNAct" id="Q96MS0">
    <property type="molecule type" value="protein"/>
</dbReference>
<dbReference type="Bgee" id="ENSG00000154134">
    <property type="expression patterns" value="Expressed in right uterine tube and 167 other cell types or tissues"/>
</dbReference>
<dbReference type="ExpressionAtlas" id="Q96MS0">
    <property type="expression patterns" value="baseline and differential"/>
</dbReference>
<dbReference type="GO" id="GO:0030424">
    <property type="term" value="C:axon"/>
    <property type="evidence" value="ECO:0000318"/>
    <property type="project" value="GO_Central"/>
</dbReference>
<dbReference type="GO" id="GO:0016020">
    <property type="term" value="C:membrane"/>
    <property type="evidence" value="ECO:0000303"/>
    <property type="project" value="UniProtKB"/>
</dbReference>
<dbReference type="GO" id="GO:0005886">
    <property type="term" value="C:plasma membrane"/>
    <property type="evidence" value="ECO:0000318"/>
    <property type="project" value="GO_Central"/>
</dbReference>
<dbReference type="GO" id="GO:0098632">
    <property type="term" value="F:cell-cell adhesion mediator activity"/>
    <property type="evidence" value="ECO:0000318"/>
    <property type="project" value="GO_Central"/>
</dbReference>
<dbReference type="GO" id="GO:0007411">
    <property type="term" value="P:axon guidance"/>
    <property type="evidence" value="ECO:0000250"/>
    <property type="project" value="UniProtKB"/>
</dbReference>
<dbReference type="GO" id="GO:0016199">
    <property type="term" value="P:axon midline choice point recognition"/>
    <property type="evidence" value="ECO:0000250"/>
    <property type="project" value="UniProtKB"/>
</dbReference>
<dbReference type="GO" id="GO:0006935">
    <property type="term" value="P:chemotaxis"/>
    <property type="evidence" value="ECO:0007669"/>
    <property type="project" value="UniProtKB-KW"/>
</dbReference>
<dbReference type="GO" id="GO:0071679">
    <property type="term" value="P:commissural neuron axon guidance"/>
    <property type="evidence" value="ECO:0007669"/>
    <property type="project" value="Ensembl"/>
</dbReference>
<dbReference type="GO" id="GO:0070593">
    <property type="term" value="P:dendrite self-avoidance"/>
    <property type="evidence" value="ECO:0000318"/>
    <property type="project" value="GO_Central"/>
</dbReference>
<dbReference type="GO" id="GO:0007156">
    <property type="term" value="P:homophilic cell adhesion via plasma membrane adhesion molecules"/>
    <property type="evidence" value="ECO:0000318"/>
    <property type="project" value="GO_Central"/>
</dbReference>
<dbReference type="GO" id="GO:0001764">
    <property type="term" value="P:neuron migration"/>
    <property type="evidence" value="ECO:0007669"/>
    <property type="project" value="Ensembl"/>
</dbReference>
<dbReference type="GO" id="GO:1902669">
    <property type="term" value="P:positive regulation of axon guidance"/>
    <property type="evidence" value="ECO:0007669"/>
    <property type="project" value="Ensembl"/>
</dbReference>
<dbReference type="CDD" id="cd00063">
    <property type="entry name" value="FN3"/>
    <property type="match status" value="3"/>
</dbReference>
<dbReference type="FunFam" id="2.60.40.10:FF:000053">
    <property type="entry name" value="Roundabout guidance receptor 1"/>
    <property type="match status" value="1"/>
</dbReference>
<dbReference type="FunFam" id="2.60.40.10:FF:000888">
    <property type="entry name" value="Roundabout guidance receptor 3"/>
    <property type="match status" value="1"/>
</dbReference>
<dbReference type="FunFam" id="2.60.40.10:FF:001028">
    <property type="entry name" value="Roundabout guidance receptor 3"/>
    <property type="match status" value="1"/>
</dbReference>
<dbReference type="FunFam" id="2.60.40.10:FF:000055">
    <property type="entry name" value="roundabout homolog 1 isoform X2"/>
    <property type="match status" value="1"/>
</dbReference>
<dbReference type="FunFam" id="2.60.40.10:FF:000026">
    <property type="entry name" value="roundabout homolog 2 isoform X1"/>
    <property type="match status" value="1"/>
</dbReference>
<dbReference type="FunFam" id="2.60.40.10:FF:000008">
    <property type="entry name" value="roundabout homolog 2 isoform X2"/>
    <property type="match status" value="2"/>
</dbReference>
<dbReference type="FunFam" id="2.60.40.10:FF:000043">
    <property type="entry name" value="roundabout homolog 2 isoform X2"/>
    <property type="match status" value="1"/>
</dbReference>
<dbReference type="Gene3D" id="2.60.40.10">
    <property type="entry name" value="Immunoglobulins"/>
    <property type="match status" value="8"/>
</dbReference>
<dbReference type="InterPro" id="IPR003961">
    <property type="entry name" value="FN3_dom"/>
</dbReference>
<dbReference type="InterPro" id="IPR036116">
    <property type="entry name" value="FN3_sf"/>
</dbReference>
<dbReference type="InterPro" id="IPR007110">
    <property type="entry name" value="Ig-like_dom"/>
</dbReference>
<dbReference type="InterPro" id="IPR036179">
    <property type="entry name" value="Ig-like_dom_sf"/>
</dbReference>
<dbReference type="InterPro" id="IPR013783">
    <property type="entry name" value="Ig-like_fold"/>
</dbReference>
<dbReference type="InterPro" id="IPR013098">
    <property type="entry name" value="Ig_I-set"/>
</dbReference>
<dbReference type="InterPro" id="IPR003599">
    <property type="entry name" value="Ig_sub"/>
</dbReference>
<dbReference type="InterPro" id="IPR003598">
    <property type="entry name" value="Ig_sub2"/>
</dbReference>
<dbReference type="InterPro" id="IPR051170">
    <property type="entry name" value="Neural/epithelial_adhesion"/>
</dbReference>
<dbReference type="PANTHER" id="PTHR12231">
    <property type="entry name" value="CTX-RELATED TYPE I TRANSMEMBRANE PROTEIN"/>
    <property type="match status" value="1"/>
</dbReference>
<dbReference type="PANTHER" id="PTHR12231:SF236">
    <property type="entry name" value="ROUNDABOUT HOMOLOG 3"/>
    <property type="match status" value="1"/>
</dbReference>
<dbReference type="Pfam" id="PF00041">
    <property type="entry name" value="fn3"/>
    <property type="match status" value="3"/>
</dbReference>
<dbReference type="Pfam" id="PF07679">
    <property type="entry name" value="I-set"/>
    <property type="match status" value="3"/>
</dbReference>
<dbReference type="Pfam" id="PF13927">
    <property type="entry name" value="Ig_3"/>
    <property type="match status" value="2"/>
</dbReference>
<dbReference type="SMART" id="SM00060">
    <property type="entry name" value="FN3"/>
    <property type="match status" value="3"/>
</dbReference>
<dbReference type="SMART" id="SM00409">
    <property type="entry name" value="IG"/>
    <property type="match status" value="5"/>
</dbReference>
<dbReference type="SMART" id="SM00408">
    <property type="entry name" value="IGc2"/>
    <property type="match status" value="5"/>
</dbReference>
<dbReference type="SUPFAM" id="SSF49265">
    <property type="entry name" value="Fibronectin type III"/>
    <property type="match status" value="2"/>
</dbReference>
<dbReference type="SUPFAM" id="SSF48726">
    <property type="entry name" value="Immunoglobulin"/>
    <property type="match status" value="5"/>
</dbReference>
<dbReference type="PROSITE" id="PS50853">
    <property type="entry name" value="FN3"/>
    <property type="match status" value="3"/>
</dbReference>
<dbReference type="PROSITE" id="PS50835">
    <property type="entry name" value="IG_LIKE"/>
    <property type="match status" value="5"/>
</dbReference>